<accession>A4IGF3</accession>
<protein>
    <recommendedName>
        <fullName>Mitochondrial inner membrane protease ATP23 homolog</fullName>
        <ecNumber>3.4.24.-</ecNumber>
    </recommendedName>
</protein>
<comment type="similarity">
    <text evidence="4">Belongs to the peptidase M76 family.</text>
</comment>
<reference key="1">
    <citation type="submission" date="2007-03" db="EMBL/GenBank/DDBJ databases">
        <authorList>
            <consortium name="NIH - Zebrafish Gene Collection (ZGC) project"/>
        </authorList>
    </citation>
    <scope>NUCLEOTIDE SEQUENCE [LARGE SCALE MRNA]</scope>
    <source>
        <tissue>Eye</tissue>
    </source>
</reference>
<gene>
    <name type="primary">atp23</name>
    <name type="synonym">xrcc6bp1</name>
    <name type="ORF">zgc:162885</name>
</gene>
<name>ATP23_DANRE</name>
<dbReference type="EC" id="3.4.24.-"/>
<dbReference type="EMBL" id="BC135073">
    <property type="protein sequence ID" value="AAI35074.1"/>
    <property type="molecule type" value="mRNA"/>
</dbReference>
<dbReference type="RefSeq" id="NP_001077049.1">
    <property type="nucleotide sequence ID" value="NM_001083580.1"/>
</dbReference>
<dbReference type="FunCoup" id="A4IGF3">
    <property type="interactions" value="1861"/>
</dbReference>
<dbReference type="STRING" id="7955.ENSDARP00000087721"/>
<dbReference type="MEROPS" id="M76.001"/>
<dbReference type="PaxDb" id="7955-ENSDARP00000087721"/>
<dbReference type="PeptideAtlas" id="A4IGF3"/>
<dbReference type="Ensembl" id="ENSDART00000093289">
    <property type="protein sequence ID" value="ENSDARP00000087721"/>
    <property type="gene ID" value="ENSDARG00000063686"/>
</dbReference>
<dbReference type="GeneID" id="100004177"/>
<dbReference type="KEGG" id="dre:100004177"/>
<dbReference type="AGR" id="ZFIN:ZDB-GENE-070410-102"/>
<dbReference type="CTD" id="91419"/>
<dbReference type="ZFIN" id="ZDB-GENE-070410-102">
    <property type="gene designation" value="atp23"/>
</dbReference>
<dbReference type="eggNOG" id="KOG3314">
    <property type="taxonomic scope" value="Eukaryota"/>
</dbReference>
<dbReference type="HOGENOM" id="CLU_079125_1_0_1"/>
<dbReference type="InParanoid" id="A4IGF3"/>
<dbReference type="OMA" id="KRHHQTC"/>
<dbReference type="OrthoDB" id="285308at2759"/>
<dbReference type="PhylomeDB" id="A4IGF3"/>
<dbReference type="TreeFam" id="TF327014"/>
<dbReference type="PRO" id="PR:A4IGF3"/>
<dbReference type="Proteomes" id="UP000000437">
    <property type="component" value="Chromosome 4"/>
</dbReference>
<dbReference type="Bgee" id="ENSDARG00000063686">
    <property type="expression patterns" value="Expressed in cardiac ventricle and 28 other cell types or tissues"/>
</dbReference>
<dbReference type="GO" id="GO:0005739">
    <property type="term" value="C:mitochondrion"/>
    <property type="evidence" value="ECO:0007669"/>
    <property type="project" value="GOC"/>
</dbReference>
<dbReference type="GO" id="GO:0046872">
    <property type="term" value="F:metal ion binding"/>
    <property type="evidence" value="ECO:0007669"/>
    <property type="project" value="UniProtKB-KW"/>
</dbReference>
<dbReference type="GO" id="GO:0004222">
    <property type="term" value="F:metalloendopeptidase activity"/>
    <property type="evidence" value="ECO:0007669"/>
    <property type="project" value="InterPro"/>
</dbReference>
<dbReference type="GO" id="GO:0034982">
    <property type="term" value="P:mitochondrial protein processing"/>
    <property type="evidence" value="ECO:0000318"/>
    <property type="project" value="GO_Central"/>
</dbReference>
<dbReference type="GO" id="GO:0033615">
    <property type="term" value="P:mitochondrial proton-transporting ATP synthase complex assembly"/>
    <property type="evidence" value="ECO:0000318"/>
    <property type="project" value="GO_Central"/>
</dbReference>
<dbReference type="InterPro" id="IPR019165">
    <property type="entry name" value="Peptidase_M76_ATP23"/>
</dbReference>
<dbReference type="PANTHER" id="PTHR21711">
    <property type="entry name" value="MITOCHONDRIAL INNER MEMBRANE PROTEASE"/>
    <property type="match status" value="1"/>
</dbReference>
<dbReference type="PANTHER" id="PTHR21711:SF0">
    <property type="entry name" value="MITOCHONDRIAL INNER MEMBRANE PROTEASE ATP23 HOMOLOG"/>
    <property type="match status" value="1"/>
</dbReference>
<dbReference type="Pfam" id="PF09768">
    <property type="entry name" value="Peptidase_M76"/>
    <property type="match status" value="1"/>
</dbReference>
<dbReference type="PROSITE" id="PS00142">
    <property type="entry name" value="ZINC_PROTEASE"/>
    <property type="match status" value="1"/>
</dbReference>
<feature type="chain" id="PRO_0000330346" description="Mitochondrial inner membrane protease ATP23 homolog">
    <location>
        <begin position="1"/>
        <end position="254"/>
    </location>
</feature>
<feature type="region of interest" description="Disordered" evidence="3">
    <location>
        <begin position="1"/>
        <end position="32"/>
    </location>
</feature>
<feature type="active site" evidence="2">
    <location>
        <position position="134"/>
    </location>
</feature>
<feature type="binding site" evidence="1">
    <location>
        <position position="133"/>
    </location>
    <ligand>
        <name>a divalent metal cation</name>
        <dbReference type="ChEBI" id="CHEBI:60240"/>
        <note>catalytic</note>
    </ligand>
</feature>
<feature type="binding site" evidence="1">
    <location>
        <position position="137"/>
    </location>
    <ligand>
        <name>a divalent metal cation</name>
        <dbReference type="ChEBI" id="CHEBI:60240"/>
        <note>catalytic</note>
    </ligand>
</feature>
<sequence>MAQSGAKAADLSREPPGEQKPSPSSRQNEEDLGYNLYPERGSRLKKSTVEESLFTFKHKCQLMLQFAMDTSPYAKLLLGAMKSSGCTVFKDRHFSCEDCDGTVSGGFDAATSQIVLCQNNIHQQAHMNRVVTHELIHAFDHCRAQVDWFSNYRHLACSEIRAANLSGDCSFINEFSRFNFGLRKHHQECVRGRALRSILAVRRVSREEAERVVDEVFDSCFNDHAPFGRIPHSKKDAKFAHRDFENRDRYYANL</sequence>
<keyword id="KW-0378">Hydrolase</keyword>
<keyword id="KW-0479">Metal-binding</keyword>
<keyword id="KW-0482">Metalloprotease</keyword>
<keyword id="KW-0645">Protease</keyword>
<keyword id="KW-1185">Reference proteome</keyword>
<evidence type="ECO:0000250" key="1"/>
<evidence type="ECO:0000255" key="2">
    <source>
        <dbReference type="PROSITE-ProRule" id="PRU10095"/>
    </source>
</evidence>
<evidence type="ECO:0000256" key="3">
    <source>
        <dbReference type="SAM" id="MobiDB-lite"/>
    </source>
</evidence>
<evidence type="ECO:0000305" key="4"/>
<proteinExistence type="evidence at transcript level"/>
<organism>
    <name type="scientific">Danio rerio</name>
    <name type="common">Zebrafish</name>
    <name type="synonym">Brachydanio rerio</name>
    <dbReference type="NCBI Taxonomy" id="7955"/>
    <lineage>
        <taxon>Eukaryota</taxon>
        <taxon>Metazoa</taxon>
        <taxon>Chordata</taxon>
        <taxon>Craniata</taxon>
        <taxon>Vertebrata</taxon>
        <taxon>Euteleostomi</taxon>
        <taxon>Actinopterygii</taxon>
        <taxon>Neopterygii</taxon>
        <taxon>Teleostei</taxon>
        <taxon>Ostariophysi</taxon>
        <taxon>Cypriniformes</taxon>
        <taxon>Danionidae</taxon>
        <taxon>Danioninae</taxon>
        <taxon>Danio</taxon>
    </lineage>
</organism>